<name>YIDD_CHLAD</name>
<evidence type="ECO:0000255" key="1">
    <source>
        <dbReference type="HAMAP-Rule" id="MF_00386"/>
    </source>
</evidence>
<keyword id="KW-1003">Cell membrane</keyword>
<keyword id="KW-0472">Membrane</keyword>
<comment type="function">
    <text evidence="1">Could be involved in insertion of integral membrane proteins into the membrane.</text>
</comment>
<comment type="subcellular location">
    <subcellularLocation>
        <location evidence="1">Cell membrane</location>
        <topology evidence="1">Peripheral membrane protein</topology>
        <orientation evidence="1">Cytoplasmic side</orientation>
    </subcellularLocation>
</comment>
<comment type="similarity">
    <text evidence="1">Belongs to the UPF0161 family.</text>
</comment>
<dbReference type="EMBL" id="CP001337">
    <property type="protein sequence ID" value="ACL26004.1"/>
    <property type="molecule type" value="Genomic_DNA"/>
</dbReference>
<dbReference type="STRING" id="326427.Cagg_3146"/>
<dbReference type="KEGG" id="cag:Cagg_3146"/>
<dbReference type="eggNOG" id="COG0759">
    <property type="taxonomic scope" value="Bacteria"/>
</dbReference>
<dbReference type="HOGENOM" id="CLU_144811_6_1_0"/>
<dbReference type="OrthoDB" id="9801753at2"/>
<dbReference type="Proteomes" id="UP000002508">
    <property type="component" value="Chromosome"/>
</dbReference>
<dbReference type="GO" id="GO:0005886">
    <property type="term" value="C:plasma membrane"/>
    <property type="evidence" value="ECO:0007669"/>
    <property type="project" value="UniProtKB-SubCell"/>
</dbReference>
<dbReference type="HAMAP" id="MF_00386">
    <property type="entry name" value="UPF0161_YidD"/>
    <property type="match status" value="1"/>
</dbReference>
<dbReference type="InterPro" id="IPR002696">
    <property type="entry name" value="Membr_insert_effic_factor_YidD"/>
</dbReference>
<dbReference type="NCBIfam" id="TIGR00278">
    <property type="entry name" value="membrane protein insertion efficiency factor YidD"/>
    <property type="match status" value="1"/>
</dbReference>
<dbReference type="PANTHER" id="PTHR33383">
    <property type="entry name" value="MEMBRANE PROTEIN INSERTION EFFICIENCY FACTOR-RELATED"/>
    <property type="match status" value="1"/>
</dbReference>
<dbReference type="PANTHER" id="PTHR33383:SF1">
    <property type="entry name" value="MEMBRANE PROTEIN INSERTION EFFICIENCY FACTOR-RELATED"/>
    <property type="match status" value="1"/>
</dbReference>
<dbReference type="Pfam" id="PF01809">
    <property type="entry name" value="YidD"/>
    <property type="match status" value="1"/>
</dbReference>
<dbReference type="SMART" id="SM01234">
    <property type="entry name" value="Haemolytic"/>
    <property type="match status" value="1"/>
</dbReference>
<protein>
    <recommendedName>
        <fullName evidence="1">Putative membrane protein insertion efficiency factor</fullName>
    </recommendedName>
</protein>
<sequence length="70" mass="8118">MLRWLLLKLIRFYQVAISPWTPPSCIYTPTCSHYGYEAIQKYGALRGGWMTIKRIARCHPFARGGYDPVP</sequence>
<organism>
    <name type="scientific">Chloroflexus aggregans (strain MD-66 / DSM 9485)</name>
    <dbReference type="NCBI Taxonomy" id="326427"/>
    <lineage>
        <taxon>Bacteria</taxon>
        <taxon>Bacillati</taxon>
        <taxon>Chloroflexota</taxon>
        <taxon>Chloroflexia</taxon>
        <taxon>Chloroflexales</taxon>
        <taxon>Chloroflexineae</taxon>
        <taxon>Chloroflexaceae</taxon>
        <taxon>Chloroflexus</taxon>
    </lineage>
</organism>
<feature type="chain" id="PRO_1000197744" description="Putative membrane protein insertion efficiency factor">
    <location>
        <begin position="1"/>
        <end position="70"/>
    </location>
</feature>
<gene>
    <name type="ordered locus">Cagg_3146</name>
</gene>
<accession>B8G7G9</accession>
<reference key="1">
    <citation type="submission" date="2008-12" db="EMBL/GenBank/DDBJ databases">
        <title>Complete sequence of Chloroflexus aggregans DSM 9485.</title>
        <authorList>
            <consortium name="US DOE Joint Genome Institute"/>
            <person name="Lucas S."/>
            <person name="Copeland A."/>
            <person name="Lapidus A."/>
            <person name="Glavina del Rio T."/>
            <person name="Dalin E."/>
            <person name="Tice H."/>
            <person name="Pitluck S."/>
            <person name="Foster B."/>
            <person name="Larimer F."/>
            <person name="Land M."/>
            <person name="Hauser L."/>
            <person name="Kyrpides N."/>
            <person name="Mikhailova N."/>
            <person name="Bryant D.A."/>
            <person name="Richardson P."/>
        </authorList>
    </citation>
    <scope>NUCLEOTIDE SEQUENCE [LARGE SCALE GENOMIC DNA]</scope>
    <source>
        <strain>MD-66 / DSM 9485</strain>
    </source>
</reference>
<proteinExistence type="inferred from homology"/>